<reference key="1">
    <citation type="journal article" date="2001" name="Virology">
        <title>Analysis of the first complete DNA sequence of an invertebrate iridovirus: coding strategy of the genome of Chilo iridescent virus.</title>
        <authorList>
            <person name="Jakob N.J."/>
            <person name="Mueller K."/>
            <person name="Bahr U."/>
            <person name="Darai G."/>
        </authorList>
    </citation>
    <scope>NUCLEOTIDE SEQUENCE [LARGE SCALE GENOMIC DNA]</scope>
</reference>
<reference key="2">
    <citation type="journal article" date="2007" name="Virol. J.">
        <title>Comparative genomic analysis of the family Iridoviridae: re-annotating and defining the core set of iridovirus genes.</title>
        <authorList>
            <person name="Eaton H.E."/>
            <person name="Metcalf J."/>
            <person name="Penny E."/>
            <person name="Tcherepanov V."/>
            <person name="Upton C."/>
            <person name="Brunetti C.R."/>
        </authorList>
    </citation>
    <scope>GENOME REANNOTATION</scope>
</reference>
<comment type="similarity">
    <text evidence="2">Belongs to the IIV-6 467R family.</text>
</comment>
<feature type="chain" id="PRO_0000377898" description="Uncharacterized protein 467R">
    <location>
        <begin position="1"/>
        <end position="503"/>
    </location>
</feature>
<feature type="coiled-coil region" evidence="1">
    <location>
        <begin position="437"/>
        <end position="465"/>
    </location>
</feature>
<organism>
    <name type="scientific">Invertebrate iridescent virus 6</name>
    <name type="common">IIV-6</name>
    <name type="synonym">Chilo iridescent virus</name>
    <dbReference type="NCBI Taxonomy" id="176652"/>
    <lineage>
        <taxon>Viruses</taxon>
        <taxon>Varidnaviria</taxon>
        <taxon>Bamfordvirae</taxon>
        <taxon>Nucleocytoviricota</taxon>
        <taxon>Megaviricetes</taxon>
        <taxon>Pimascovirales</taxon>
        <taxon>Iridoviridae</taxon>
        <taxon>Betairidovirinae</taxon>
        <taxon>Iridovirus</taxon>
    </lineage>
</organism>
<gene>
    <name type="ORF">IIV6-467R</name>
</gene>
<keyword id="KW-0175">Coiled coil</keyword>
<keyword id="KW-1185">Reference proteome</keyword>
<evidence type="ECO:0000255" key="1"/>
<evidence type="ECO:0000305" key="2"/>
<protein>
    <recommendedName>
        <fullName>Uncharacterized protein 467R</fullName>
    </recommendedName>
</protein>
<accession>Q91F59</accession>
<sequence length="503" mass="58401">MDDIFNFELPLHDRIKAIVKFGDETTIKRLISLLTISNSSIIKNTLYHLCKFCSDISCVLRLEIALALIDYEKEETEPSEIIGFEALDYVCFSMHKSKEIPFSCKLNAYLILNSGLPNLKRVYLYLYDMLTDSSTTFQFKYKTVKFLVSEREENNITSLMVEYCISVLLSNFHDSSYPKINNETYEDYLQIFILTCQLSLSYVPKLKCSCIAENKLLEICKNQNLSVNIRADASDMLLSYGSSENKEEAKIILDSLSFDNHTIKTIYNNKENVHTSTINKTAINTITIIIEDVNKMFQREDIWILTENILQNLIEKYPPNFKPQIKSQIDNAIKAYNRIMYLDNALYTAYNFNLKNIMNYVWTFINNSNKVSNKVELEKRLIEEMREMNNTCSSGYLTRFANIFSGFLENGGVFIGWDEQILSIFYGKVNSAITSSLNKDLILENLIETENENDKQEFQKLLRTILPNIIESIKIEFKDHISESDIDLYIRRALSVFEGHEFI</sequence>
<dbReference type="EMBL" id="AF303741">
    <property type="protein sequence ID" value="AAK82327.1"/>
    <property type="molecule type" value="Genomic_DNA"/>
</dbReference>
<dbReference type="RefSeq" id="NP_149930.1">
    <property type="nucleotide sequence ID" value="NC_003038.1"/>
</dbReference>
<dbReference type="KEGG" id="vg:1733002"/>
<dbReference type="OrthoDB" id="10492at10239"/>
<dbReference type="Proteomes" id="UP000001359">
    <property type="component" value="Genome"/>
</dbReference>
<proteinExistence type="inferred from homology"/>
<organismHost>
    <name type="scientific">Acheta domesticus</name>
    <name type="common">House cricket</name>
    <dbReference type="NCBI Taxonomy" id="6997"/>
</organismHost>
<organismHost>
    <name type="scientific">Chilo suppressalis</name>
    <name type="common">Asiatic rice borer moth</name>
    <dbReference type="NCBI Taxonomy" id="168631"/>
</organismHost>
<organismHost>
    <name type="scientific">Gryllus bimaculatus</name>
    <name type="common">Two-spotted cricket</name>
    <dbReference type="NCBI Taxonomy" id="6999"/>
</organismHost>
<organismHost>
    <name type="scientific">Gryllus campestris</name>
    <dbReference type="NCBI Taxonomy" id="58607"/>
</organismHost>
<organismHost>
    <name type="scientific">Spodoptera frugiperda</name>
    <name type="common">Fall armyworm</name>
    <dbReference type="NCBI Taxonomy" id="7108"/>
</organismHost>
<name>VF467_IIV6</name>